<name>CH60_EHRRG</name>
<organism>
    <name type="scientific">Ehrlichia ruminantium (strain Gardel)</name>
    <dbReference type="NCBI Taxonomy" id="302409"/>
    <lineage>
        <taxon>Bacteria</taxon>
        <taxon>Pseudomonadati</taxon>
        <taxon>Pseudomonadota</taxon>
        <taxon>Alphaproteobacteria</taxon>
        <taxon>Rickettsiales</taxon>
        <taxon>Anaplasmataceae</taxon>
        <taxon>Ehrlichia</taxon>
    </lineage>
</organism>
<evidence type="ECO:0000255" key="1">
    <source>
        <dbReference type="HAMAP-Rule" id="MF_00600"/>
    </source>
</evidence>
<dbReference type="EC" id="5.6.1.7" evidence="1"/>
<dbReference type="EMBL" id="CR925677">
    <property type="protein sequence ID" value="CAI28116.1"/>
    <property type="molecule type" value="Genomic_DNA"/>
</dbReference>
<dbReference type="RefSeq" id="WP_011155322.1">
    <property type="nucleotide sequence ID" value="NC_006831.1"/>
</dbReference>
<dbReference type="SMR" id="Q5FFZ1"/>
<dbReference type="GeneID" id="33057703"/>
<dbReference type="KEGG" id="erg:ERGA_CDS_06640"/>
<dbReference type="HOGENOM" id="CLU_016503_3_0_5"/>
<dbReference type="OrthoDB" id="9766614at2"/>
<dbReference type="Proteomes" id="UP000000533">
    <property type="component" value="Chromosome"/>
</dbReference>
<dbReference type="GO" id="GO:0005737">
    <property type="term" value="C:cytoplasm"/>
    <property type="evidence" value="ECO:0007669"/>
    <property type="project" value="UniProtKB-SubCell"/>
</dbReference>
<dbReference type="GO" id="GO:0005524">
    <property type="term" value="F:ATP binding"/>
    <property type="evidence" value="ECO:0007669"/>
    <property type="project" value="UniProtKB-UniRule"/>
</dbReference>
<dbReference type="GO" id="GO:0140662">
    <property type="term" value="F:ATP-dependent protein folding chaperone"/>
    <property type="evidence" value="ECO:0007669"/>
    <property type="project" value="InterPro"/>
</dbReference>
<dbReference type="GO" id="GO:0016853">
    <property type="term" value="F:isomerase activity"/>
    <property type="evidence" value="ECO:0007669"/>
    <property type="project" value="UniProtKB-KW"/>
</dbReference>
<dbReference type="GO" id="GO:0051082">
    <property type="term" value="F:unfolded protein binding"/>
    <property type="evidence" value="ECO:0007669"/>
    <property type="project" value="UniProtKB-UniRule"/>
</dbReference>
<dbReference type="GO" id="GO:0042026">
    <property type="term" value="P:protein refolding"/>
    <property type="evidence" value="ECO:0007669"/>
    <property type="project" value="UniProtKB-UniRule"/>
</dbReference>
<dbReference type="CDD" id="cd03344">
    <property type="entry name" value="GroEL"/>
    <property type="match status" value="1"/>
</dbReference>
<dbReference type="FunFam" id="3.50.7.10:FF:000001">
    <property type="entry name" value="60 kDa chaperonin"/>
    <property type="match status" value="1"/>
</dbReference>
<dbReference type="Gene3D" id="3.50.7.10">
    <property type="entry name" value="GroEL"/>
    <property type="match status" value="1"/>
</dbReference>
<dbReference type="Gene3D" id="1.10.560.10">
    <property type="entry name" value="GroEL-like equatorial domain"/>
    <property type="match status" value="1"/>
</dbReference>
<dbReference type="Gene3D" id="3.30.260.10">
    <property type="entry name" value="TCP-1-like chaperonin intermediate domain"/>
    <property type="match status" value="1"/>
</dbReference>
<dbReference type="HAMAP" id="MF_00600">
    <property type="entry name" value="CH60"/>
    <property type="match status" value="1"/>
</dbReference>
<dbReference type="InterPro" id="IPR018370">
    <property type="entry name" value="Chaperonin_Cpn60_CS"/>
</dbReference>
<dbReference type="InterPro" id="IPR001844">
    <property type="entry name" value="Cpn60/GroEL"/>
</dbReference>
<dbReference type="InterPro" id="IPR002423">
    <property type="entry name" value="Cpn60/GroEL/TCP-1"/>
</dbReference>
<dbReference type="InterPro" id="IPR027409">
    <property type="entry name" value="GroEL-like_apical_dom_sf"/>
</dbReference>
<dbReference type="InterPro" id="IPR027413">
    <property type="entry name" value="GROEL-like_equatorial_sf"/>
</dbReference>
<dbReference type="InterPro" id="IPR027410">
    <property type="entry name" value="TCP-1-like_intermed_sf"/>
</dbReference>
<dbReference type="NCBIfam" id="TIGR02348">
    <property type="entry name" value="GroEL"/>
    <property type="match status" value="1"/>
</dbReference>
<dbReference type="NCBIfam" id="NF000592">
    <property type="entry name" value="PRK00013.1"/>
    <property type="match status" value="1"/>
</dbReference>
<dbReference type="NCBIfam" id="NF009487">
    <property type="entry name" value="PRK12849.1"/>
    <property type="match status" value="1"/>
</dbReference>
<dbReference type="NCBIfam" id="NF009488">
    <property type="entry name" value="PRK12850.1"/>
    <property type="match status" value="1"/>
</dbReference>
<dbReference type="NCBIfam" id="NF009489">
    <property type="entry name" value="PRK12851.1"/>
    <property type="match status" value="1"/>
</dbReference>
<dbReference type="PANTHER" id="PTHR45633">
    <property type="entry name" value="60 KDA HEAT SHOCK PROTEIN, MITOCHONDRIAL"/>
    <property type="match status" value="1"/>
</dbReference>
<dbReference type="Pfam" id="PF00118">
    <property type="entry name" value="Cpn60_TCP1"/>
    <property type="match status" value="1"/>
</dbReference>
<dbReference type="PRINTS" id="PR00298">
    <property type="entry name" value="CHAPERONIN60"/>
</dbReference>
<dbReference type="SUPFAM" id="SSF52029">
    <property type="entry name" value="GroEL apical domain-like"/>
    <property type="match status" value="1"/>
</dbReference>
<dbReference type="SUPFAM" id="SSF48592">
    <property type="entry name" value="GroEL equatorial domain-like"/>
    <property type="match status" value="1"/>
</dbReference>
<dbReference type="SUPFAM" id="SSF54849">
    <property type="entry name" value="GroEL-intermediate domain like"/>
    <property type="match status" value="1"/>
</dbReference>
<dbReference type="PROSITE" id="PS00296">
    <property type="entry name" value="CHAPERONINS_CPN60"/>
    <property type="match status" value="1"/>
</dbReference>
<reference key="1">
    <citation type="journal article" date="2006" name="J. Bacteriol.">
        <title>Comparative genomic analysis of three strains of Ehrlichia ruminantium reveals an active process of genome size plasticity.</title>
        <authorList>
            <person name="Frutos R."/>
            <person name="Viari A."/>
            <person name="Ferraz C."/>
            <person name="Morgat A."/>
            <person name="Eychenie S."/>
            <person name="Kandassamy Y."/>
            <person name="Chantal I."/>
            <person name="Bensaid A."/>
            <person name="Coissac E."/>
            <person name="Vachiery N."/>
            <person name="Demaille J."/>
            <person name="Martinez D."/>
        </authorList>
    </citation>
    <scope>NUCLEOTIDE SEQUENCE [LARGE SCALE GENOMIC DNA]</scope>
    <source>
        <strain>Gardel</strain>
    </source>
</reference>
<gene>
    <name evidence="1" type="primary">groEL</name>
    <name evidence="1" type="synonym">groL</name>
    <name type="ordered locus">ERGA_CDS_06640</name>
</gene>
<comment type="function">
    <text evidence="1">Together with its co-chaperonin GroES, plays an essential role in assisting protein folding. The GroEL-GroES system forms a nano-cage that allows encapsulation of the non-native substrate proteins and provides a physical environment optimized to promote and accelerate protein folding.</text>
</comment>
<comment type="catalytic activity">
    <reaction evidence="1">
        <text>ATP + H2O + a folded polypeptide = ADP + phosphate + an unfolded polypeptide.</text>
        <dbReference type="EC" id="5.6.1.7"/>
    </reaction>
</comment>
<comment type="subunit">
    <text evidence="1">Forms a cylinder of 14 subunits composed of two heptameric rings stacked back-to-back. Interacts with the co-chaperonin GroES.</text>
</comment>
<comment type="subcellular location">
    <subcellularLocation>
        <location evidence="1">Cytoplasm</location>
    </subcellularLocation>
</comment>
<comment type="similarity">
    <text evidence="1">Belongs to the chaperonin (HSP60) family.</text>
</comment>
<accession>Q5FFZ1</accession>
<sequence length="551" mass="58859">MANMVVTGEQLDKSIREVVRILEDAVGCTAGPKGLTVAISKPYGAPEVTKDGYKVMKSIKPEDPLALAIANIIAQSASQCNDKVGDGTTTCSILTAKVIEEVSKVKAAGADIICVREGVLKAKEAVLEALKCMKREVLSEEEIAQVATISANGDKNIGTKIAQCVKEVGKDGVITVEESKGFKELDVEKTDGMQFDRGYLSPYFVTNSEKMLVEFENPYILLTEKKLNIIQPLLPILENIARSGRPLLIIAEDVEGEALSTLVLNKLRGGLHVAAVKAPGFGDRRKDMLGDIAILTGAKHVINDELAIKMEDLTLCDLGTAKNIRITKDTTTIIGSVDNSCAHVQSRICQIRMQIDNSTSDYDKEKLQERLAKLSGGVAVLKVGGSSEVEVKERKDRVEDALHATRAAVEEGVVPGGGAALLYTLSALDNLKSKNDDEQLGINIVKRALQAPIKRIIKNAGSENAPCVIAHLLKQNDKELIFNVDVMNFANAFTSGVIDPLKVVRIAFDFAVSLAAVFMTLNAIVVDIPSKDDNSAAGGAGMGGMGGMGGF</sequence>
<keyword id="KW-0067">ATP-binding</keyword>
<keyword id="KW-0143">Chaperone</keyword>
<keyword id="KW-0963">Cytoplasm</keyword>
<keyword id="KW-0413">Isomerase</keyword>
<keyword id="KW-0547">Nucleotide-binding</keyword>
<protein>
    <recommendedName>
        <fullName evidence="1">Chaperonin GroEL</fullName>
        <ecNumber evidence="1">5.6.1.7</ecNumber>
    </recommendedName>
    <alternativeName>
        <fullName evidence="1">60 kDa chaperonin</fullName>
    </alternativeName>
    <alternativeName>
        <fullName evidence="1">Chaperonin-60</fullName>
        <shortName evidence="1">Cpn60</shortName>
    </alternativeName>
</protein>
<proteinExistence type="inferred from homology"/>
<feature type="chain" id="PRO_0000063363" description="Chaperonin GroEL">
    <location>
        <begin position="1"/>
        <end position="551"/>
    </location>
</feature>
<feature type="binding site" evidence="1">
    <location>
        <begin position="29"/>
        <end position="32"/>
    </location>
    <ligand>
        <name>ATP</name>
        <dbReference type="ChEBI" id="CHEBI:30616"/>
    </ligand>
</feature>
<feature type="binding site" evidence="1">
    <location>
        <position position="50"/>
    </location>
    <ligand>
        <name>ATP</name>
        <dbReference type="ChEBI" id="CHEBI:30616"/>
    </ligand>
</feature>
<feature type="binding site" evidence="1">
    <location>
        <begin position="86"/>
        <end position="90"/>
    </location>
    <ligand>
        <name>ATP</name>
        <dbReference type="ChEBI" id="CHEBI:30616"/>
    </ligand>
</feature>
<feature type="binding site" evidence="1">
    <location>
        <position position="417"/>
    </location>
    <ligand>
        <name>ATP</name>
        <dbReference type="ChEBI" id="CHEBI:30616"/>
    </ligand>
</feature>
<feature type="binding site" evidence="1">
    <location>
        <position position="499"/>
    </location>
    <ligand>
        <name>ATP</name>
        <dbReference type="ChEBI" id="CHEBI:30616"/>
    </ligand>
</feature>